<dbReference type="EMBL" id="CP000822">
    <property type="protein sequence ID" value="ABV15584.1"/>
    <property type="status" value="ALT_INIT"/>
    <property type="molecule type" value="Genomic_DNA"/>
</dbReference>
<dbReference type="RefSeq" id="WP_012135266.1">
    <property type="nucleotide sequence ID" value="NC_009792.1"/>
</dbReference>
<dbReference type="SMR" id="A8AQ21"/>
<dbReference type="STRING" id="290338.CKO_04530"/>
<dbReference type="GeneID" id="45138081"/>
<dbReference type="KEGG" id="cko:CKO_04530"/>
<dbReference type="HOGENOM" id="CLU_053334_0_0_6"/>
<dbReference type="OrthoDB" id="1672942at2"/>
<dbReference type="UniPathway" id="UPA00704">
    <property type="reaction ID" value="UER00716"/>
</dbReference>
<dbReference type="Proteomes" id="UP000008148">
    <property type="component" value="Chromosome"/>
</dbReference>
<dbReference type="GO" id="GO:0005886">
    <property type="term" value="C:plasma membrane"/>
    <property type="evidence" value="ECO:0007669"/>
    <property type="project" value="TreeGrafter"/>
</dbReference>
<dbReference type="GO" id="GO:0005975">
    <property type="term" value="P:carbohydrate metabolic process"/>
    <property type="evidence" value="ECO:0007669"/>
    <property type="project" value="InterPro"/>
</dbReference>
<dbReference type="GO" id="GO:2001059">
    <property type="term" value="P:D-tagatose 6-phosphate catabolic process"/>
    <property type="evidence" value="ECO:0007669"/>
    <property type="project" value="UniProtKB-UniRule"/>
</dbReference>
<dbReference type="GO" id="GO:0009401">
    <property type="term" value="P:phosphoenolpyruvate-dependent sugar phosphotransferase system"/>
    <property type="evidence" value="ECO:0007669"/>
    <property type="project" value="TreeGrafter"/>
</dbReference>
<dbReference type="FunFam" id="3.20.20.70:FF:000141">
    <property type="entry name" value="D-tagatose-1,6-bisphosphate aldolase subunit GatZ"/>
    <property type="match status" value="1"/>
</dbReference>
<dbReference type="Gene3D" id="3.20.20.70">
    <property type="entry name" value="Aldolase class I"/>
    <property type="match status" value="1"/>
</dbReference>
<dbReference type="Gene3D" id="1.10.400.20">
    <property type="entry name" value="putative tagatose 6-phosphate kinase domain like"/>
    <property type="match status" value="1"/>
</dbReference>
<dbReference type="HAMAP" id="MF_01295">
    <property type="entry name" value="Tagatose_aldol_KbaZ"/>
    <property type="match status" value="1"/>
</dbReference>
<dbReference type="InterPro" id="IPR013785">
    <property type="entry name" value="Aldolase_TIM"/>
</dbReference>
<dbReference type="InterPro" id="IPR012062">
    <property type="entry name" value="GatZ/KbaZ-like"/>
</dbReference>
<dbReference type="InterPro" id="IPR050303">
    <property type="entry name" value="GatZ_KbaZ_carbometab"/>
</dbReference>
<dbReference type="InterPro" id="IPR023435">
    <property type="entry name" value="TagBP_ald_KbaZ"/>
</dbReference>
<dbReference type="NCBIfam" id="TIGR02810">
    <property type="entry name" value="agaZ_gatZ"/>
    <property type="match status" value="1"/>
</dbReference>
<dbReference type="NCBIfam" id="NF012002">
    <property type="entry name" value="PRK15458.1"/>
    <property type="match status" value="1"/>
</dbReference>
<dbReference type="PANTHER" id="PTHR32502:SF2">
    <property type="entry name" value="D-TAGATOSE-1,6-BISPHOSPHATE ALDOLASE SUBUNIT KBAZ"/>
    <property type="match status" value="1"/>
</dbReference>
<dbReference type="PANTHER" id="PTHR32502">
    <property type="entry name" value="N-ACETYLGALACTOSAMINE PERMEASE II COMPONENT-RELATED"/>
    <property type="match status" value="1"/>
</dbReference>
<dbReference type="Pfam" id="PF08013">
    <property type="entry name" value="GatZ_KbaZ-like"/>
    <property type="match status" value="1"/>
</dbReference>
<dbReference type="PIRSF" id="PIRSF009264">
    <property type="entry name" value="TagBP_ald_AgaZ"/>
    <property type="match status" value="1"/>
</dbReference>
<dbReference type="SUPFAM" id="SSF51569">
    <property type="entry name" value="Aldolase"/>
    <property type="match status" value="1"/>
</dbReference>
<accession>A8AQ21</accession>
<comment type="function">
    <text evidence="1">Component of the tagatose-1,6-bisphosphate aldolase KbaYZ that is required for full activity and stability of the Y subunit. Could have a chaperone-like function for the proper and stable folding of KbaY. When expressed alone, KbaZ does not show any aldolase activity.</text>
</comment>
<comment type="pathway">
    <text evidence="1">Carbohydrate metabolism; D-tagatose 6-phosphate degradation; D-glyceraldehyde 3-phosphate and glycerone phosphate from D-tagatose 6-phosphate: step 2/2.</text>
</comment>
<comment type="subunit">
    <text evidence="1">Forms a complex with KbaY.</text>
</comment>
<comment type="similarity">
    <text evidence="1">Belongs to the GatZ/KbaZ family. KbaZ subfamily.</text>
</comment>
<comment type="sequence caution" evidence="2">
    <conflict type="erroneous initiation">
        <sequence resource="EMBL-CDS" id="ABV15584"/>
    </conflict>
</comment>
<proteinExistence type="inferred from homology"/>
<reference key="1">
    <citation type="submission" date="2007-08" db="EMBL/GenBank/DDBJ databases">
        <authorList>
            <consortium name="The Citrobacter koseri Genome Sequencing Project"/>
            <person name="McClelland M."/>
            <person name="Sanderson E.K."/>
            <person name="Porwollik S."/>
            <person name="Spieth J."/>
            <person name="Clifton W.S."/>
            <person name="Latreille P."/>
            <person name="Courtney L."/>
            <person name="Wang C."/>
            <person name="Pepin K."/>
            <person name="Bhonagiri V."/>
            <person name="Nash W."/>
            <person name="Johnson M."/>
            <person name="Thiruvilangam P."/>
            <person name="Wilson R."/>
        </authorList>
    </citation>
    <scope>NUCLEOTIDE SEQUENCE [LARGE SCALE GENOMIC DNA]</scope>
    <source>
        <strain>ATCC BAA-895 / CDC 4225-83 / SGSC4696</strain>
    </source>
</reference>
<name>KBAZ_CITK8</name>
<evidence type="ECO:0000255" key="1">
    <source>
        <dbReference type="HAMAP-Rule" id="MF_01295"/>
    </source>
</evidence>
<evidence type="ECO:0000305" key="2"/>
<gene>
    <name evidence="1" type="primary">kbaZ</name>
    <name type="ordered locus">CKO_04530</name>
</gene>
<feature type="chain" id="PRO_0000372522" description="D-tagatose-1,6-bisphosphate aldolase subunit KbaZ">
    <location>
        <begin position="1"/>
        <end position="431"/>
    </location>
</feature>
<keyword id="KW-1185">Reference proteome</keyword>
<sequence length="431" mass="47978">MKHLTEMVEQHKRGNTNGIYAVCSAHPLVLEAAIRYAHANHTPLLIEATSNQVDQFGGYTGMTPADFRGFVYQLADSLNFPQSQLILGGDHLGPNRWQNLPAAQAMANADDLIKSYVAAGFKKIHLDCSMSCANDPIPLTDEIVAERAARLAKIAEETCREHFGESDLVYVIGTEVPVPGGAHETLTELEVTTPDAARATLEAHRHAFEKQGLSAIWPRIIGLVVQPGVEFDHTHIIDYQPQKAIALSAMVEAYDTLVFEAHSTDYQTPQSLRQLVKDHFAILKVGPALTFALREALFSLAAIEEELLPAKTSSGLRHVLESVMLDRPEYWQSHYHGDGNARRLARGYSYSDRVRYYWPDQQIDEAFARLVRNLADDPIPLPLISQYLPLQYARVREGDLNATPRELIISHIQDVLQQYHAACQGVTSQNA</sequence>
<protein>
    <recommendedName>
        <fullName evidence="1">D-tagatose-1,6-bisphosphate aldolase subunit KbaZ</fullName>
    </recommendedName>
</protein>
<organism>
    <name type="scientific">Citrobacter koseri (strain ATCC BAA-895 / CDC 4225-83 / SGSC4696)</name>
    <dbReference type="NCBI Taxonomy" id="290338"/>
    <lineage>
        <taxon>Bacteria</taxon>
        <taxon>Pseudomonadati</taxon>
        <taxon>Pseudomonadota</taxon>
        <taxon>Gammaproteobacteria</taxon>
        <taxon>Enterobacterales</taxon>
        <taxon>Enterobacteriaceae</taxon>
        <taxon>Citrobacter</taxon>
    </lineage>
</organism>